<dbReference type="EMBL" id="AP009240">
    <property type="protein sequence ID" value="BAG76746.1"/>
    <property type="molecule type" value="Genomic_DNA"/>
</dbReference>
<dbReference type="RefSeq" id="WP_000072536.1">
    <property type="nucleotide sequence ID" value="NC_011415.1"/>
</dbReference>
<dbReference type="SMR" id="B6I9N5"/>
<dbReference type="GeneID" id="93776258"/>
<dbReference type="KEGG" id="ecy:ECSE_1222"/>
<dbReference type="HOGENOM" id="CLU_067812_0_1_6"/>
<dbReference type="Proteomes" id="UP000008199">
    <property type="component" value="Chromosome"/>
</dbReference>
<dbReference type="GO" id="GO:0000902">
    <property type="term" value="P:cell morphogenesis"/>
    <property type="evidence" value="ECO:0007669"/>
    <property type="project" value="InterPro"/>
</dbReference>
<dbReference type="GO" id="GO:0000917">
    <property type="term" value="P:division septum assembly"/>
    <property type="evidence" value="ECO:0007669"/>
    <property type="project" value="UniProtKB-KW"/>
</dbReference>
<dbReference type="GO" id="GO:0051302">
    <property type="term" value="P:regulation of cell division"/>
    <property type="evidence" value="ECO:0007669"/>
    <property type="project" value="InterPro"/>
</dbReference>
<dbReference type="GO" id="GO:1901891">
    <property type="term" value="P:regulation of cell septum assembly"/>
    <property type="evidence" value="ECO:0007669"/>
    <property type="project" value="InterPro"/>
</dbReference>
<dbReference type="FunFam" id="2.160.20.70:FF:000002">
    <property type="entry name" value="Probable septum site-determining protein MinC"/>
    <property type="match status" value="1"/>
</dbReference>
<dbReference type="Gene3D" id="2.160.20.70">
    <property type="match status" value="1"/>
</dbReference>
<dbReference type="Gene3D" id="3.30.70.260">
    <property type="match status" value="1"/>
</dbReference>
<dbReference type="HAMAP" id="MF_00267">
    <property type="entry name" value="MinC"/>
    <property type="match status" value="1"/>
</dbReference>
<dbReference type="InterPro" id="IPR016098">
    <property type="entry name" value="CAP/MinC_C"/>
</dbReference>
<dbReference type="InterPro" id="IPR013033">
    <property type="entry name" value="MinC"/>
</dbReference>
<dbReference type="InterPro" id="IPR036145">
    <property type="entry name" value="MinC_C_sf"/>
</dbReference>
<dbReference type="InterPro" id="IPR007874">
    <property type="entry name" value="MinC_N"/>
</dbReference>
<dbReference type="InterPro" id="IPR005526">
    <property type="entry name" value="Septum_form_inhib_MinC_C"/>
</dbReference>
<dbReference type="NCBIfam" id="TIGR01222">
    <property type="entry name" value="minC"/>
    <property type="match status" value="1"/>
</dbReference>
<dbReference type="PANTHER" id="PTHR34108">
    <property type="entry name" value="SEPTUM SITE-DETERMINING PROTEIN MINC"/>
    <property type="match status" value="1"/>
</dbReference>
<dbReference type="PANTHER" id="PTHR34108:SF1">
    <property type="entry name" value="SEPTUM SITE-DETERMINING PROTEIN MINC"/>
    <property type="match status" value="1"/>
</dbReference>
<dbReference type="Pfam" id="PF03775">
    <property type="entry name" value="MinC_C"/>
    <property type="match status" value="1"/>
</dbReference>
<dbReference type="Pfam" id="PF05209">
    <property type="entry name" value="MinC_N"/>
    <property type="match status" value="1"/>
</dbReference>
<dbReference type="SUPFAM" id="SSF63848">
    <property type="entry name" value="Cell-division inhibitor MinC, C-terminal domain"/>
    <property type="match status" value="1"/>
</dbReference>
<evidence type="ECO:0000255" key="1">
    <source>
        <dbReference type="HAMAP-Rule" id="MF_00267"/>
    </source>
</evidence>
<evidence type="ECO:0000256" key="2">
    <source>
        <dbReference type="SAM" id="MobiDB-lite"/>
    </source>
</evidence>
<proteinExistence type="inferred from homology"/>
<protein>
    <recommendedName>
        <fullName evidence="1">Probable septum site-determining protein MinC</fullName>
    </recommendedName>
</protein>
<feature type="chain" id="PRO_1000114279" description="Probable septum site-determining protein MinC">
    <location>
        <begin position="1"/>
        <end position="231"/>
    </location>
</feature>
<feature type="region of interest" description="Disordered" evidence="2">
    <location>
        <begin position="102"/>
        <end position="125"/>
    </location>
</feature>
<gene>
    <name evidence="1" type="primary">minC</name>
    <name type="ordered locus">ECSE_1222</name>
</gene>
<name>MINC_ECOSE</name>
<sequence>MSNTPIELKGSSFTLSVVHLHEAEPKVIHQALEDKIAQAPAFLKHAPVVLNVSALEDPVNWSAMHKAVSATGLRVIGVSGCKDAQLKAEIEKMGLPILTEGKEKAPRPAPAPQAPAQNTTPVTKTRLIDTPVRSGQRIYAPQCDLIVTSHVSAGAELIADGNIHVYGMMRGRALAGASGDRETQIFCTNLMAELVSIAGEYWLSDQIPAEFYGKAARLQLVENALTVQPLN</sequence>
<accession>B6I9N5</accession>
<organism>
    <name type="scientific">Escherichia coli (strain SE11)</name>
    <dbReference type="NCBI Taxonomy" id="409438"/>
    <lineage>
        <taxon>Bacteria</taxon>
        <taxon>Pseudomonadati</taxon>
        <taxon>Pseudomonadota</taxon>
        <taxon>Gammaproteobacteria</taxon>
        <taxon>Enterobacterales</taxon>
        <taxon>Enterobacteriaceae</taxon>
        <taxon>Escherichia</taxon>
    </lineage>
</organism>
<reference key="1">
    <citation type="journal article" date="2008" name="DNA Res.">
        <title>Complete genome sequence and comparative analysis of the wild-type commensal Escherichia coli strain SE11 isolated from a healthy adult.</title>
        <authorList>
            <person name="Oshima K."/>
            <person name="Toh H."/>
            <person name="Ogura Y."/>
            <person name="Sasamoto H."/>
            <person name="Morita H."/>
            <person name="Park S.-H."/>
            <person name="Ooka T."/>
            <person name="Iyoda S."/>
            <person name="Taylor T.D."/>
            <person name="Hayashi T."/>
            <person name="Itoh K."/>
            <person name="Hattori M."/>
        </authorList>
    </citation>
    <scope>NUCLEOTIDE SEQUENCE [LARGE SCALE GENOMIC DNA]</scope>
    <source>
        <strain>SE11</strain>
    </source>
</reference>
<comment type="function">
    <text evidence="1">Cell division inhibitor that blocks the formation of polar Z ring septums. Rapidly oscillates between the poles of the cell to destabilize FtsZ filaments that have formed before they mature into polar Z rings. Prevents FtsZ polymerization.</text>
</comment>
<comment type="subunit">
    <text evidence="1">Interacts with MinD and FtsZ.</text>
</comment>
<comment type="similarity">
    <text evidence="1">Belongs to the MinC family.</text>
</comment>
<keyword id="KW-0131">Cell cycle</keyword>
<keyword id="KW-0132">Cell division</keyword>
<keyword id="KW-0717">Septation</keyword>